<gene>
    <name evidence="1" type="primary">rpsD</name>
    <name type="ordered locus">Mjls_1141</name>
</gene>
<protein>
    <recommendedName>
        <fullName evidence="1">Small ribosomal subunit protein uS4</fullName>
    </recommendedName>
    <alternativeName>
        <fullName evidence="3">30S ribosomal protein S4</fullName>
    </alternativeName>
</protein>
<sequence length="201" mass="23306">MARYTGPATRKSRRLGVDLVGGDQSFEKRPYPPGQHGRARIKESEYRTQLQEKQKARFTYGVLEKQFRRYYDEANRQPGKTGDNLLRILESRLDNVVYRAGLARTRRMARQLVSHGHFTVNGVKVDIPSYRVSQYDIIDVREKSLNTDPFVIARETAGDRPIPSWLQVVGERQRILVHQLPERAQIDVPLTEQLIVELYSK</sequence>
<accession>A3PVL7</accession>
<keyword id="KW-0687">Ribonucleoprotein</keyword>
<keyword id="KW-0689">Ribosomal protein</keyword>
<keyword id="KW-0694">RNA-binding</keyword>
<keyword id="KW-0699">rRNA-binding</keyword>
<name>RS4_MYCSJ</name>
<feature type="chain" id="PRO_0000293316" description="Small ribosomal subunit protein uS4">
    <location>
        <begin position="1"/>
        <end position="201"/>
    </location>
</feature>
<feature type="domain" description="S4 RNA-binding" evidence="1">
    <location>
        <begin position="91"/>
        <end position="157"/>
    </location>
</feature>
<feature type="region of interest" description="Disordered" evidence="2">
    <location>
        <begin position="1"/>
        <end position="38"/>
    </location>
</feature>
<reference key="1">
    <citation type="submission" date="2007-02" db="EMBL/GenBank/DDBJ databases">
        <title>Complete sequence of Mycobacterium sp. JLS.</title>
        <authorList>
            <consortium name="US DOE Joint Genome Institute"/>
            <person name="Copeland A."/>
            <person name="Lucas S."/>
            <person name="Lapidus A."/>
            <person name="Barry K."/>
            <person name="Detter J.C."/>
            <person name="Glavina del Rio T."/>
            <person name="Hammon N."/>
            <person name="Israni S."/>
            <person name="Dalin E."/>
            <person name="Tice H."/>
            <person name="Pitluck S."/>
            <person name="Chain P."/>
            <person name="Malfatti S."/>
            <person name="Shin M."/>
            <person name="Vergez L."/>
            <person name="Schmutz J."/>
            <person name="Larimer F."/>
            <person name="Land M."/>
            <person name="Hauser L."/>
            <person name="Kyrpides N."/>
            <person name="Mikhailova N."/>
            <person name="Miller C.D."/>
            <person name="Anderson A.J."/>
            <person name="Sims R.C."/>
            <person name="Richardson P."/>
        </authorList>
    </citation>
    <scope>NUCLEOTIDE SEQUENCE [LARGE SCALE GENOMIC DNA]</scope>
    <source>
        <strain>JLS</strain>
    </source>
</reference>
<comment type="function">
    <text evidence="1">One of the primary rRNA binding proteins, it binds directly to 16S rRNA where it nucleates assembly of the body of the 30S subunit.</text>
</comment>
<comment type="function">
    <text evidence="1">With S5 and S12 plays an important role in translational accuracy.</text>
</comment>
<comment type="subunit">
    <text evidence="1">Part of the 30S ribosomal subunit. Contacts protein S5. The interaction surface between S4 and S5 is involved in control of translational fidelity.</text>
</comment>
<comment type="similarity">
    <text evidence="1">Belongs to the universal ribosomal protein uS4 family.</text>
</comment>
<dbReference type="EMBL" id="CP000580">
    <property type="protein sequence ID" value="ABN96944.1"/>
    <property type="molecule type" value="Genomic_DNA"/>
</dbReference>
<dbReference type="SMR" id="A3PVL7"/>
<dbReference type="KEGG" id="mjl:Mjls_1141"/>
<dbReference type="HOGENOM" id="CLU_092403_0_2_11"/>
<dbReference type="BioCyc" id="MSP164757:G1G8C-1153-MONOMER"/>
<dbReference type="GO" id="GO:0015935">
    <property type="term" value="C:small ribosomal subunit"/>
    <property type="evidence" value="ECO:0007669"/>
    <property type="project" value="InterPro"/>
</dbReference>
<dbReference type="GO" id="GO:0019843">
    <property type="term" value="F:rRNA binding"/>
    <property type="evidence" value="ECO:0007669"/>
    <property type="project" value="UniProtKB-UniRule"/>
</dbReference>
<dbReference type="GO" id="GO:0003735">
    <property type="term" value="F:structural constituent of ribosome"/>
    <property type="evidence" value="ECO:0007669"/>
    <property type="project" value="InterPro"/>
</dbReference>
<dbReference type="GO" id="GO:0042274">
    <property type="term" value="P:ribosomal small subunit biogenesis"/>
    <property type="evidence" value="ECO:0007669"/>
    <property type="project" value="TreeGrafter"/>
</dbReference>
<dbReference type="GO" id="GO:0006412">
    <property type="term" value="P:translation"/>
    <property type="evidence" value="ECO:0007669"/>
    <property type="project" value="UniProtKB-UniRule"/>
</dbReference>
<dbReference type="CDD" id="cd00165">
    <property type="entry name" value="S4"/>
    <property type="match status" value="1"/>
</dbReference>
<dbReference type="FunFam" id="1.10.1050.10:FF:000001">
    <property type="entry name" value="30S ribosomal protein S4"/>
    <property type="match status" value="1"/>
</dbReference>
<dbReference type="FunFam" id="3.10.290.10:FF:000001">
    <property type="entry name" value="30S ribosomal protein S4"/>
    <property type="match status" value="1"/>
</dbReference>
<dbReference type="Gene3D" id="1.10.1050.10">
    <property type="entry name" value="Ribosomal Protein S4 Delta 41, Chain A, domain 1"/>
    <property type="match status" value="1"/>
</dbReference>
<dbReference type="Gene3D" id="3.10.290.10">
    <property type="entry name" value="RNA-binding S4 domain"/>
    <property type="match status" value="1"/>
</dbReference>
<dbReference type="HAMAP" id="MF_01306_B">
    <property type="entry name" value="Ribosomal_uS4_B"/>
    <property type="match status" value="1"/>
</dbReference>
<dbReference type="InterPro" id="IPR022801">
    <property type="entry name" value="Ribosomal_uS4"/>
</dbReference>
<dbReference type="InterPro" id="IPR005709">
    <property type="entry name" value="Ribosomal_uS4_bac-type"/>
</dbReference>
<dbReference type="InterPro" id="IPR018079">
    <property type="entry name" value="Ribosomal_uS4_CS"/>
</dbReference>
<dbReference type="InterPro" id="IPR001912">
    <property type="entry name" value="Ribosomal_uS4_N"/>
</dbReference>
<dbReference type="InterPro" id="IPR002942">
    <property type="entry name" value="S4_RNA-bd"/>
</dbReference>
<dbReference type="InterPro" id="IPR036986">
    <property type="entry name" value="S4_RNA-bd_sf"/>
</dbReference>
<dbReference type="NCBIfam" id="NF003717">
    <property type="entry name" value="PRK05327.1"/>
    <property type="match status" value="1"/>
</dbReference>
<dbReference type="NCBIfam" id="TIGR01017">
    <property type="entry name" value="rpsD_bact"/>
    <property type="match status" value="1"/>
</dbReference>
<dbReference type="PANTHER" id="PTHR11831">
    <property type="entry name" value="30S 40S RIBOSOMAL PROTEIN"/>
    <property type="match status" value="1"/>
</dbReference>
<dbReference type="PANTHER" id="PTHR11831:SF4">
    <property type="entry name" value="SMALL RIBOSOMAL SUBUNIT PROTEIN US4M"/>
    <property type="match status" value="1"/>
</dbReference>
<dbReference type="Pfam" id="PF00163">
    <property type="entry name" value="Ribosomal_S4"/>
    <property type="match status" value="1"/>
</dbReference>
<dbReference type="Pfam" id="PF01479">
    <property type="entry name" value="S4"/>
    <property type="match status" value="1"/>
</dbReference>
<dbReference type="SMART" id="SM01390">
    <property type="entry name" value="Ribosomal_S4"/>
    <property type="match status" value="1"/>
</dbReference>
<dbReference type="SMART" id="SM00363">
    <property type="entry name" value="S4"/>
    <property type="match status" value="1"/>
</dbReference>
<dbReference type="SUPFAM" id="SSF55174">
    <property type="entry name" value="Alpha-L RNA-binding motif"/>
    <property type="match status" value="1"/>
</dbReference>
<dbReference type="PROSITE" id="PS00632">
    <property type="entry name" value="RIBOSOMAL_S4"/>
    <property type="match status" value="1"/>
</dbReference>
<dbReference type="PROSITE" id="PS50889">
    <property type="entry name" value="S4"/>
    <property type="match status" value="1"/>
</dbReference>
<evidence type="ECO:0000255" key="1">
    <source>
        <dbReference type="HAMAP-Rule" id="MF_01306"/>
    </source>
</evidence>
<evidence type="ECO:0000256" key="2">
    <source>
        <dbReference type="SAM" id="MobiDB-lite"/>
    </source>
</evidence>
<evidence type="ECO:0000305" key="3"/>
<organism>
    <name type="scientific">Mycobacterium sp. (strain JLS)</name>
    <dbReference type="NCBI Taxonomy" id="164757"/>
    <lineage>
        <taxon>Bacteria</taxon>
        <taxon>Bacillati</taxon>
        <taxon>Actinomycetota</taxon>
        <taxon>Actinomycetes</taxon>
        <taxon>Mycobacteriales</taxon>
        <taxon>Mycobacteriaceae</taxon>
        <taxon>Mycobacterium</taxon>
    </lineage>
</organism>
<proteinExistence type="inferred from homology"/>